<protein>
    <recommendedName>
        <fullName evidence="1">Protein SlyX homolog</fullName>
    </recommendedName>
</protein>
<keyword id="KW-1185">Reference proteome</keyword>
<organism>
    <name type="scientific">Haemophilus ducreyi (strain 35000HP / ATCC 700724)</name>
    <dbReference type="NCBI Taxonomy" id="233412"/>
    <lineage>
        <taxon>Bacteria</taxon>
        <taxon>Pseudomonadati</taxon>
        <taxon>Pseudomonadota</taxon>
        <taxon>Gammaproteobacteria</taxon>
        <taxon>Pasteurellales</taxon>
        <taxon>Pasteurellaceae</taxon>
        <taxon>Haemophilus</taxon>
    </lineage>
</organism>
<evidence type="ECO:0000255" key="1">
    <source>
        <dbReference type="HAMAP-Rule" id="MF_00715"/>
    </source>
</evidence>
<proteinExistence type="inferred from homology"/>
<reference key="1">
    <citation type="submission" date="2003-06" db="EMBL/GenBank/DDBJ databases">
        <title>The complete genome sequence of Haemophilus ducreyi.</title>
        <authorList>
            <person name="Munson R.S. Jr."/>
            <person name="Ray W.C."/>
            <person name="Mahairas G."/>
            <person name="Sabo P."/>
            <person name="Mungur R."/>
            <person name="Johnson L."/>
            <person name="Nguyen D."/>
            <person name="Wang J."/>
            <person name="Forst C."/>
            <person name="Hood L."/>
        </authorList>
    </citation>
    <scope>NUCLEOTIDE SEQUENCE [LARGE SCALE GENOMIC DNA]</scope>
    <source>
        <strain>35000HP / ATCC 700724</strain>
    </source>
</reference>
<dbReference type="EMBL" id="AE017143">
    <property type="protein sequence ID" value="AAP96628.1"/>
    <property type="molecule type" value="Genomic_DNA"/>
</dbReference>
<dbReference type="RefSeq" id="WP_010945656.1">
    <property type="nucleotide sequence ID" value="NC_002940.2"/>
</dbReference>
<dbReference type="SMR" id="Q7VKJ9"/>
<dbReference type="STRING" id="233412.HD_1899"/>
<dbReference type="GeneID" id="60733478"/>
<dbReference type="KEGG" id="hdu:HD_1899"/>
<dbReference type="eggNOG" id="COG2900">
    <property type="taxonomic scope" value="Bacteria"/>
</dbReference>
<dbReference type="HOGENOM" id="CLU_180796_4_0_6"/>
<dbReference type="OrthoDB" id="5771733at2"/>
<dbReference type="Proteomes" id="UP000001022">
    <property type="component" value="Chromosome"/>
</dbReference>
<dbReference type="Gene3D" id="1.20.5.300">
    <property type="match status" value="1"/>
</dbReference>
<dbReference type="HAMAP" id="MF_00715">
    <property type="entry name" value="SlyX"/>
    <property type="match status" value="1"/>
</dbReference>
<dbReference type="InterPro" id="IPR007236">
    <property type="entry name" value="SlyX"/>
</dbReference>
<dbReference type="NCBIfam" id="NF002556">
    <property type="entry name" value="PRK02119.1"/>
    <property type="match status" value="1"/>
</dbReference>
<dbReference type="PANTHER" id="PTHR36508">
    <property type="entry name" value="PROTEIN SLYX"/>
    <property type="match status" value="1"/>
</dbReference>
<dbReference type="PANTHER" id="PTHR36508:SF1">
    <property type="entry name" value="PROTEIN SLYX"/>
    <property type="match status" value="1"/>
</dbReference>
<dbReference type="Pfam" id="PF04102">
    <property type="entry name" value="SlyX"/>
    <property type="match status" value="1"/>
</dbReference>
<sequence>MTTQNELLNRIAELETKVAFQDNVIEELNQVLIHHQFVLDKLQTQVRHFANKFKNIQSSNVASQAEETPPPHY</sequence>
<name>SLYX_HAEDU</name>
<gene>
    <name evidence="1" type="primary">slyX</name>
    <name type="ordered locus">HD_1899</name>
</gene>
<accession>Q7VKJ9</accession>
<comment type="similarity">
    <text evidence="1">Belongs to the SlyX family.</text>
</comment>
<feature type="chain" id="PRO_0000209202" description="Protein SlyX homolog">
    <location>
        <begin position="1"/>
        <end position="73"/>
    </location>
</feature>